<keyword id="KW-0028">Amino-acid biosynthesis</keyword>
<keyword id="KW-0100">Branched-chain amino acid biosynthesis</keyword>
<keyword id="KW-0432">Leucine biosynthesis</keyword>
<keyword id="KW-0456">Lyase</keyword>
<keyword id="KW-1185">Reference proteome</keyword>
<accession>C4Z1K1</accession>
<gene>
    <name evidence="1" type="primary">leuD</name>
    <name type="ordered locus">EUBELI_01367</name>
</gene>
<feature type="chain" id="PRO_1000213365" description="3-isopropylmalate dehydratase small subunit">
    <location>
        <begin position="1"/>
        <end position="164"/>
    </location>
</feature>
<proteinExistence type="inferred from homology"/>
<evidence type="ECO:0000255" key="1">
    <source>
        <dbReference type="HAMAP-Rule" id="MF_01032"/>
    </source>
</evidence>
<protein>
    <recommendedName>
        <fullName evidence="1">3-isopropylmalate dehydratase small subunit</fullName>
        <ecNumber evidence="1">4.2.1.33</ecNumber>
    </recommendedName>
    <alternativeName>
        <fullName evidence="1">Alpha-IPM isomerase</fullName>
        <shortName evidence="1">IPMI</shortName>
    </alternativeName>
    <alternativeName>
        <fullName evidence="1">Isopropylmalate isomerase</fullName>
    </alternativeName>
</protein>
<reference key="1">
    <citation type="journal article" date="2009" name="Proc. Natl. Acad. Sci. U.S.A.">
        <title>Characterizing a model human gut microbiota composed of members of its two dominant bacterial phyla.</title>
        <authorList>
            <person name="Mahowald M.A."/>
            <person name="Rey F.E."/>
            <person name="Seedorf H."/>
            <person name="Turnbaugh P.J."/>
            <person name="Fulton R.S."/>
            <person name="Wollam A."/>
            <person name="Shah N."/>
            <person name="Wang C."/>
            <person name="Magrini V."/>
            <person name="Wilson R.K."/>
            <person name="Cantarel B.L."/>
            <person name="Coutinho P.M."/>
            <person name="Henrissat B."/>
            <person name="Crock L.W."/>
            <person name="Russell A."/>
            <person name="Verberkmoes N.C."/>
            <person name="Hettich R.L."/>
            <person name="Gordon J.I."/>
        </authorList>
    </citation>
    <scope>NUCLEOTIDE SEQUENCE [LARGE SCALE GENOMIC DNA]</scope>
    <source>
        <strain>ATCC 27750 / DSM 3376 / VPI C15-48 / C15-B4</strain>
    </source>
</reference>
<name>LEUD_LACE2</name>
<sequence>MNEKFSGKVWVLGDDIDTDIIIPTEYLALKTVEDMKPYAFSPLRPELAGQIKPGDIIVAGKNFGCGSSREQAPEVIKALGIKCVIAKSYARIFFRNSINNGLLLIENADLHDEVTEGDTIDVEVNAKITHNGKAYPIASLPDNLVDILNAGGLVKAMRKLNGLD</sequence>
<organism>
    <name type="scientific">Lachnospira eligens (strain ATCC 27750 / DSM 3376 / VPI C15-48 / C15-B4)</name>
    <name type="common">Eubacterium eligens</name>
    <dbReference type="NCBI Taxonomy" id="515620"/>
    <lineage>
        <taxon>Bacteria</taxon>
        <taxon>Bacillati</taxon>
        <taxon>Bacillota</taxon>
        <taxon>Clostridia</taxon>
        <taxon>Lachnospirales</taxon>
        <taxon>Lachnospiraceae</taxon>
        <taxon>Lachnospira</taxon>
    </lineage>
</organism>
<comment type="function">
    <text evidence="1">Catalyzes the isomerization between 2-isopropylmalate and 3-isopropylmalate, via the formation of 2-isopropylmaleate.</text>
</comment>
<comment type="catalytic activity">
    <reaction evidence="1">
        <text>(2R,3S)-3-isopropylmalate = (2S)-2-isopropylmalate</text>
        <dbReference type="Rhea" id="RHEA:32287"/>
        <dbReference type="ChEBI" id="CHEBI:1178"/>
        <dbReference type="ChEBI" id="CHEBI:35121"/>
        <dbReference type="EC" id="4.2.1.33"/>
    </reaction>
</comment>
<comment type="pathway">
    <text evidence="1">Amino-acid biosynthesis; L-leucine biosynthesis; L-leucine from 3-methyl-2-oxobutanoate: step 2/4.</text>
</comment>
<comment type="subunit">
    <text evidence="1">Heterodimer of LeuC and LeuD.</text>
</comment>
<comment type="similarity">
    <text evidence="1">Belongs to the LeuD family. LeuD type 2 subfamily.</text>
</comment>
<dbReference type="EC" id="4.2.1.33" evidence="1"/>
<dbReference type="EMBL" id="CP001104">
    <property type="protein sequence ID" value="ACR72362.1"/>
    <property type="molecule type" value="Genomic_DNA"/>
</dbReference>
<dbReference type="RefSeq" id="WP_012739597.1">
    <property type="nucleotide sequence ID" value="NC_012778.1"/>
</dbReference>
<dbReference type="SMR" id="C4Z1K1"/>
<dbReference type="STRING" id="515620.EUBELI_01367"/>
<dbReference type="GeneID" id="41356075"/>
<dbReference type="KEGG" id="eel:EUBELI_01367"/>
<dbReference type="eggNOG" id="COG0066">
    <property type="taxonomic scope" value="Bacteria"/>
</dbReference>
<dbReference type="HOGENOM" id="CLU_081378_1_1_9"/>
<dbReference type="UniPathway" id="UPA00048">
    <property type="reaction ID" value="UER00071"/>
</dbReference>
<dbReference type="Proteomes" id="UP000001476">
    <property type="component" value="Chromosome"/>
</dbReference>
<dbReference type="GO" id="GO:0003861">
    <property type="term" value="F:3-isopropylmalate dehydratase activity"/>
    <property type="evidence" value="ECO:0007669"/>
    <property type="project" value="UniProtKB-UniRule"/>
</dbReference>
<dbReference type="GO" id="GO:0009098">
    <property type="term" value="P:L-leucine biosynthetic process"/>
    <property type="evidence" value="ECO:0007669"/>
    <property type="project" value="UniProtKB-UniRule"/>
</dbReference>
<dbReference type="CDD" id="cd01577">
    <property type="entry name" value="IPMI_Swivel"/>
    <property type="match status" value="1"/>
</dbReference>
<dbReference type="Gene3D" id="3.20.19.10">
    <property type="entry name" value="Aconitase, domain 4"/>
    <property type="match status" value="1"/>
</dbReference>
<dbReference type="HAMAP" id="MF_01032">
    <property type="entry name" value="LeuD_type2"/>
    <property type="match status" value="1"/>
</dbReference>
<dbReference type="InterPro" id="IPR015928">
    <property type="entry name" value="Aconitase/3IPM_dehydase_swvl"/>
</dbReference>
<dbReference type="InterPro" id="IPR000573">
    <property type="entry name" value="AconitaseA/IPMdHydase_ssu_swvl"/>
</dbReference>
<dbReference type="InterPro" id="IPR033940">
    <property type="entry name" value="IPMI_Swivel"/>
</dbReference>
<dbReference type="InterPro" id="IPR050075">
    <property type="entry name" value="LeuD"/>
</dbReference>
<dbReference type="InterPro" id="IPR011827">
    <property type="entry name" value="LeuD_type2/HacB/DmdB"/>
</dbReference>
<dbReference type="NCBIfam" id="TIGR02087">
    <property type="entry name" value="LEUD_arch"/>
    <property type="match status" value="1"/>
</dbReference>
<dbReference type="PANTHER" id="PTHR43345:SF2">
    <property type="entry name" value="3-ISOPROPYLMALATE DEHYDRATASE SMALL SUBUNIT 1"/>
    <property type="match status" value="1"/>
</dbReference>
<dbReference type="PANTHER" id="PTHR43345">
    <property type="entry name" value="3-ISOPROPYLMALATE DEHYDRATASE SMALL SUBUNIT 2-RELATED-RELATED"/>
    <property type="match status" value="1"/>
</dbReference>
<dbReference type="Pfam" id="PF00694">
    <property type="entry name" value="Aconitase_C"/>
    <property type="match status" value="1"/>
</dbReference>
<dbReference type="SUPFAM" id="SSF52016">
    <property type="entry name" value="LeuD/IlvD-like"/>
    <property type="match status" value="1"/>
</dbReference>